<protein>
    <recommendedName>
        <fullName evidence="1">Holliday junction branch migration complex subunit RuvB</fullName>
        <ecNumber evidence="1">3.6.4.-</ecNumber>
    </recommendedName>
</protein>
<sequence>MTEQRTIASSATREDEAADASIRPKRLADYLGQQPVRDQMEIYIQAAKARGEAMDHVLIFGPPGLGKTTLSHVIANELGVSLRVTSGPVIEKAGDLAALLTNLQPHDVLFIDEIHRLSPVVEEVLYPAMEDFQIDIMIGDGPAARSIKIDLPPFTLIGATTRAGLLTAPLRDRFGIVQRLEFYSPQELTRIVIRSAAILGIDCTPDGAAEIARRARGTPRIANRLLRRVRDFAQVKAAGHIDLTVAQAAMQMLKVDPEGFDELDRRMLRTIVDHFDGGPVGVESLAASLSEERGTLEDVIEPYLIQQGFLIRTARGRMVTPKAYLHLGLKPPRDSAPAIGEPGDLF</sequence>
<organism>
    <name type="scientific">Xanthomonas campestris pv. campestris (strain ATCC 33913 / DSM 3586 / NCPPB 528 / LMG 568 / P 25)</name>
    <dbReference type="NCBI Taxonomy" id="190485"/>
    <lineage>
        <taxon>Bacteria</taxon>
        <taxon>Pseudomonadati</taxon>
        <taxon>Pseudomonadota</taxon>
        <taxon>Gammaproteobacteria</taxon>
        <taxon>Lysobacterales</taxon>
        <taxon>Lysobacteraceae</taxon>
        <taxon>Xanthomonas</taxon>
    </lineage>
</organism>
<name>RUVB_XANCP</name>
<reference key="1">
    <citation type="journal article" date="2002" name="Nature">
        <title>Comparison of the genomes of two Xanthomonas pathogens with differing host specificities.</title>
        <authorList>
            <person name="da Silva A.C.R."/>
            <person name="Ferro J.A."/>
            <person name="Reinach F.C."/>
            <person name="Farah C.S."/>
            <person name="Furlan L.R."/>
            <person name="Quaggio R.B."/>
            <person name="Monteiro-Vitorello C.B."/>
            <person name="Van Sluys M.A."/>
            <person name="Almeida N.F. Jr."/>
            <person name="Alves L.M.C."/>
            <person name="do Amaral A.M."/>
            <person name="Bertolini M.C."/>
            <person name="Camargo L.E.A."/>
            <person name="Camarotte G."/>
            <person name="Cannavan F."/>
            <person name="Cardozo J."/>
            <person name="Chambergo F."/>
            <person name="Ciapina L.P."/>
            <person name="Cicarelli R.M.B."/>
            <person name="Coutinho L.L."/>
            <person name="Cursino-Santos J.R."/>
            <person name="El-Dorry H."/>
            <person name="Faria J.B."/>
            <person name="Ferreira A.J.S."/>
            <person name="Ferreira R.C.C."/>
            <person name="Ferro M.I.T."/>
            <person name="Formighieri E.F."/>
            <person name="Franco M.C."/>
            <person name="Greggio C.C."/>
            <person name="Gruber A."/>
            <person name="Katsuyama A.M."/>
            <person name="Kishi L.T."/>
            <person name="Leite R.P."/>
            <person name="Lemos E.G.M."/>
            <person name="Lemos M.V.F."/>
            <person name="Locali E.C."/>
            <person name="Machado M.A."/>
            <person name="Madeira A.M.B.N."/>
            <person name="Martinez-Rossi N.M."/>
            <person name="Martins E.C."/>
            <person name="Meidanis J."/>
            <person name="Menck C.F.M."/>
            <person name="Miyaki C.Y."/>
            <person name="Moon D.H."/>
            <person name="Moreira L.M."/>
            <person name="Novo M.T.M."/>
            <person name="Okura V.K."/>
            <person name="Oliveira M.C."/>
            <person name="Oliveira V.R."/>
            <person name="Pereira H.A."/>
            <person name="Rossi A."/>
            <person name="Sena J.A.D."/>
            <person name="Silva C."/>
            <person name="de Souza R.F."/>
            <person name="Spinola L.A.F."/>
            <person name="Takita M.A."/>
            <person name="Tamura R.E."/>
            <person name="Teixeira E.C."/>
            <person name="Tezza R.I.D."/>
            <person name="Trindade dos Santos M."/>
            <person name="Truffi D."/>
            <person name="Tsai S.M."/>
            <person name="White F.F."/>
            <person name="Setubal J.C."/>
            <person name="Kitajima J.P."/>
        </authorList>
    </citation>
    <scope>NUCLEOTIDE SEQUENCE [LARGE SCALE GENOMIC DNA]</scope>
    <source>
        <strain>ATCC 33913 / DSM 3586 / NCPPB 528 / LMG 568 / P 25</strain>
    </source>
</reference>
<comment type="function">
    <text evidence="1">The RuvA-RuvB-RuvC complex processes Holliday junction (HJ) DNA during genetic recombination and DNA repair, while the RuvA-RuvB complex plays an important role in the rescue of blocked DNA replication forks via replication fork reversal (RFR). RuvA specifically binds to HJ cruciform DNA, conferring on it an open structure. The RuvB hexamer acts as an ATP-dependent pump, pulling dsDNA into and through the RuvAB complex. RuvB forms 2 homohexamers on either side of HJ DNA bound by 1 or 2 RuvA tetramers; 4 subunits per hexamer contact DNA at a time. Coordinated motions by a converter formed by DNA-disengaged RuvB subunits stimulates ATP hydrolysis and nucleotide exchange. Immobilization of the converter enables RuvB to convert the ATP-contained energy into a lever motion, pulling 2 nucleotides of DNA out of the RuvA tetramer per ATP hydrolyzed, thus driving DNA branch migration. The RuvB motors rotate together with the DNA substrate, which together with the progressing nucleotide cycle form the mechanistic basis for DNA recombination by continuous HJ branch migration. Branch migration allows RuvC to scan DNA until it finds its consensus sequence, where it cleaves and resolves cruciform DNA.</text>
</comment>
<comment type="catalytic activity">
    <reaction evidence="1">
        <text>ATP + H2O = ADP + phosphate + H(+)</text>
        <dbReference type="Rhea" id="RHEA:13065"/>
        <dbReference type="ChEBI" id="CHEBI:15377"/>
        <dbReference type="ChEBI" id="CHEBI:15378"/>
        <dbReference type="ChEBI" id="CHEBI:30616"/>
        <dbReference type="ChEBI" id="CHEBI:43474"/>
        <dbReference type="ChEBI" id="CHEBI:456216"/>
    </reaction>
</comment>
<comment type="subunit">
    <text evidence="1">Homohexamer. Forms an RuvA(8)-RuvB(12)-Holliday junction (HJ) complex. HJ DNA is sandwiched between 2 RuvA tetramers; dsDNA enters through RuvA and exits via RuvB. An RuvB hexamer assembles on each DNA strand where it exits the tetramer. Each RuvB hexamer is contacted by two RuvA subunits (via domain III) on 2 adjacent RuvB subunits; this complex drives branch migration. In the full resolvosome a probable DNA-RuvA(4)-RuvB(12)-RuvC(2) complex forms which resolves the HJ.</text>
</comment>
<comment type="subcellular location">
    <subcellularLocation>
        <location evidence="1">Cytoplasm</location>
    </subcellularLocation>
</comment>
<comment type="domain">
    <text evidence="1">Has 3 domains, the large (RuvB-L) and small ATPase (RuvB-S) domains and the C-terminal head (RuvB-H) domain. The head domain binds DNA, while the ATPase domains jointly bind ATP, ADP or are empty depending on the state of the subunit in the translocation cycle. During a single DNA translocation step the structure of each domain remains the same, but their relative positions change.</text>
</comment>
<comment type="similarity">
    <text evidence="1">Belongs to the RuvB family.</text>
</comment>
<gene>
    <name evidence="1" type="primary">ruvB</name>
    <name type="ordered locus">XCC3023</name>
</gene>
<proteinExistence type="inferred from homology"/>
<evidence type="ECO:0000255" key="1">
    <source>
        <dbReference type="HAMAP-Rule" id="MF_00016"/>
    </source>
</evidence>
<evidence type="ECO:0000256" key="2">
    <source>
        <dbReference type="SAM" id="MobiDB-lite"/>
    </source>
</evidence>
<keyword id="KW-0067">ATP-binding</keyword>
<keyword id="KW-0963">Cytoplasm</keyword>
<keyword id="KW-0227">DNA damage</keyword>
<keyword id="KW-0233">DNA recombination</keyword>
<keyword id="KW-0234">DNA repair</keyword>
<keyword id="KW-0238">DNA-binding</keyword>
<keyword id="KW-0378">Hydrolase</keyword>
<keyword id="KW-0547">Nucleotide-binding</keyword>
<keyword id="KW-1185">Reference proteome</keyword>
<dbReference type="EC" id="3.6.4.-" evidence="1"/>
<dbReference type="EMBL" id="AE008922">
    <property type="protein sequence ID" value="AAM42294.1"/>
    <property type="molecule type" value="Genomic_DNA"/>
</dbReference>
<dbReference type="RefSeq" id="NP_638370.1">
    <property type="nucleotide sequence ID" value="NC_003902.1"/>
</dbReference>
<dbReference type="RefSeq" id="WP_011038139.1">
    <property type="nucleotide sequence ID" value="NC_003902.1"/>
</dbReference>
<dbReference type="SMR" id="Q8P6E7"/>
<dbReference type="STRING" id="190485.XCC3023"/>
<dbReference type="EnsemblBacteria" id="AAM42294">
    <property type="protein sequence ID" value="AAM42294"/>
    <property type="gene ID" value="XCC3023"/>
</dbReference>
<dbReference type="KEGG" id="xcc:XCC3023"/>
<dbReference type="PATRIC" id="fig|190485.4.peg.3224"/>
<dbReference type="eggNOG" id="COG2255">
    <property type="taxonomic scope" value="Bacteria"/>
</dbReference>
<dbReference type="HOGENOM" id="CLU_055599_1_0_6"/>
<dbReference type="OrthoDB" id="9804478at2"/>
<dbReference type="Proteomes" id="UP000001010">
    <property type="component" value="Chromosome"/>
</dbReference>
<dbReference type="GO" id="GO:0005737">
    <property type="term" value="C:cytoplasm"/>
    <property type="evidence" value="ECO:0007669"/>
    <property type="project" value="UniProtKB-SubCell"/>
</dbReference>
<dbReference type="GO" id="GO:0048476">
    <property type="term" value="C:Holliday junction resolvase complex"/>
    <property type="evidence" value="ECO:0007669"/>
    <property type="project" value="UniProtKB-UniRule"/>
</dbReference>
<dbReference type="GO" id="GO:0005524">
    <property type="term" value="F:ATP binding"/>
    <property type="evidence" value="ECO:0007669"/>
    <property type="project" value="UniProtKB-UniRule"/>
</dbReference>
<dbReference type="GO" id="GO:0016887">
    <property type="term" value="F:ATP hydrolysis activity"/>
    <property type="evidence" value="ECO:0007669"/>
    <property type="project" value="InterPro"/>
</dbReference>
<dbReference type="GO" id="GO:0000400">
    <property type="term" value="F:four-way junction DNA binding"/>
    <property type="evidence" value="ECO:0007669"/>
    <property type="project" value="UniProtKB-UniRule"/>
</dbReference>
<dbReference type="GO" id="GO:0009378">
    <property type="term" value="F:four-way junction helicase activity"/>
    <property type="evidence" value="ECO:0007669"/>
    <property type="project" value="InterPro"/>
</dbReference>
<dbReference type="GO" id="GO:0006310">
    <property type="term" value="P:DNA recombination"/>
    <property type="evidence" value="ECO:0007669"/>
    <property type="project" value="UniProtKB-UniRule"/>
</dbReference>
<dbReference type="GO" id="GO:0006281">
    <property type="term" value="P:DNA repair"/>
    <property type="evidence" value="ECO:0007669"/>
    <property type="project" value="UniProtKB-UniRule"/>
</dbReference>
<dbReference type="CDD" id="cd00009">
    <property type="entry name" value="AAA"/>
    <property type="match status" value="1"/>
</dbReference>
<dbReference type="FunFam" id="3.40.50.300:FF:000073">
    <property type="entry name" value="Holliday junction ATP-dependent DNA helicase RuvB"/>
    <property type="match status" value="1"/>
</dbReference>
<dbReference type="Gene3D" id="1.10.8.60">
    <property type="match status" value="1"/>
</dbReference>
<dbReference type="Gene3D" id="3.40.50.300">
    <property type="entry name" value="P-loop containing nucleotide triphosphate hydrolases"/>
    <property type="match status" value="1"/>
</dbReference>
<dbReference type="Gene3D" id="1.10.10.10">
    <property type="entry name" value="Winged helix-like DNA-binding domain superfamily/Winged helix DNA-binding domain"/>
    <property type="match status" value="1"/>
</dbReference>
<dbReference type="HAMAP" id="MF_00016">
    <property type="entry name" value="DNA_HJ_migration_RuvB"/>
    <property type="match status" value="1"/>
</dbReference>
<dbReference type="InterPro" id="IPR003593">
    <property type="entry name" value="AAA+_ATPase"/>
</dbReference>
<dbReference type="InterPro" id="IPR041445">
    <property type="entry name" value="AAA_lid_4"/>
</dbReference>
<dbReference type="InterPro" id="IPR004605">
    <property type="entry name" value="DNA_helicase_Holl-junc_RuvB"/>
</dbReference>
<dbReference type="InterPro" id="IPR027417">
    <property type="entry name" value="P-loop_NTPase"/>
</dbReference>
<dbReference type="InterPro" id="IPR008824">
    <property type="entry name" value="RuvB-like_N"/>
</dbReference>
<dbReference type="InterPro" id="IPR008823">
    <property type="entry name" value="RuvB_C"/>
</dbReference>
<dbReference type="InterPro" id="IPR036388">
    <property type="entry name" value="WH-like_DNA-bd_sf"/>
</dbReference>
<dbReference type="InterPro" id="IPR036390">
    <property type="entry name" value="WH_DNA-bd_sf"/>
</dbReference>
<dbReference type="NCBIfam" id="NF000868">
    <property type="entry name" value="PRK00080.1"/>
    <property type="match status" value="1"/>
</dbReference>
<dbReference type="NCBIfam" id="TIGR00635">
    <property type="entry name" value="ruvB"/>
    <property type="match status" value="1"/>
</dbReference>
<dbReference type="PANTHER" id="PTHR42848">
    <property type="match status" value="1"/>
</dbReference>
<dbReference type="PANTHER" id="PTHR42848:SF1">
    <property type="entry name" value="HOLLIDAY JUNCTION BRANCH MIGRATION COMPLEX SUBUNIT RUVB"/>
    <property type="match status" value="1"/>
</dbReference>
<dbReference type="Pfam" id="PF17864">
    <property type="entry name" value="AAA_lid_4"/>
    <property type="match status" value="1"/>
</dbReference>
<dbReference type="Pfam" id="PF05491">
    <property type="entry name" value="RuvB_C"/>
    <property type="match status" value="1"/>
</dbReference>
<dbReference type="Pfam" id="PF05496">
    <property type="entry name" value="RuvB_N"/>
    <property type="match status" value="1"/>
</dbReference>
<dbReference type="SMART" id="SM00382">
    <property type="entry name" value="AAA"/>
    <property type="match status" value="1"/>
</dbReference>
<dbReference type="SUPFAM" id="SSF52540">
    <property type="entry name" value="P-loop containing nucleoside triphosphate hydrolases"/>
    <property type="match status" value="1"/>
</dbReference>
<dbReference type="SUPFAM" id="SSF46785">
    <property type="entry name" value="Winged helix' DNA-binding domain"/>
    <property type="match status" value="1"/>
</dbReference>
<accession>Q8P6E7</accession>
<feature type="chain" id="PRO_0000165634" description="Holliday junction branch migration complex subunit RuvB">
    <location>
        <begin position="1"/>
        <end position="346"/>
    </location>
</feature>
<feature type="region of interest" description="Large ATPase domain (RuvB-L)" evidence="1">
    <location>
        <begin position="1"/>
        <end position="183"/>
    </location>
</feature>
<feature type="region of interest" description="Disordered" evidence="2">
    <location>
        <begin position="1"/>
        <end position="20"/>
    </location>
</feature>
<feature type="region of interest" description="Small ATPAse domain (RuvB-S)" evidence="1">
    <location>
        <begin position="184"/>
        <end position="254"/>
    </location>
</feature>
<feature type="region of interest" description="Head domain (RuvB-H)" evidence="1">
    <location>
        <begin position="257"/>
        <end position="346"/>
    </location>
</feature>
<feature type="compositionally biased region" description="Polar residues" evidence="2">
    <location>
        <begin position="1"/>
        <end position="11"/>
    </location>
</feature>
<feature type="binding site" evidence="1">
    <location>
        <position position="22"/>
    </location>
    <ligand>
        <name>ATP</name>
        <dbReference type="ChEBI" id="CHEBI:30616"/>
    </ligand>
</feature>
<feature type="binding site" evidence="1">
    <location>
        <position position="23"/>
    </location>
    <ligand>
        <name>ATP</name>
        <dbReference type="ChEBI" id="CHEBI:30616"/>
    </ligand>
</feature>
<feature type="binding site" evidence="1">
    <location>
        <position position="64"/>
    </location>
    <ligand>
        <name>ATP</name>
        <dbReference type="ChEBI" id="CHEBI:30616"/>
    </ligand>
</feature>
<feature type="binding site" evidence="1">
    <location>
        <position position="67"/>
    </location>
    <ligand>
        <name>ATP</name>
        <dbReference type="ChEBI" id="CHEBI:30616"/>
    </ligand>
</feature>
<feature type="binding site" evidence="1">
    <location>
        <position position="68"/>
    </location>
    <ligand>
        <name>ATP</name>
        <dbReference type="ChEBI" id="CHEBI:30616"/>
    </ligand>
</feature>
<feature type="binding site" evidence="1">
    <location>
        <position position="68"/>
    </location>
    <ligand>
        <name>Mg(2+)</name>
        <dbReference type="ChEBI" id="CHEBI:18420"/>
    </ligand>
</feature>
<feature type="binding site" evidence="1">
    <location>
        <position position="69"/>
    </location>
    <ligand>
        <name>ATP</name>
        <dbReference type="ChEBI" id="CHEBI:30616"/>
    </ligand>
</feature>
<feature type="binding site" evidence="1">
    <location>
        <begin position="130"/>
        <end position="132"/>
    </location>
    <ligand>
        <name>ATP</name>
        <dbReference type="ChEBI" id="CHEBI:30616"/>
    </ligand>
</feature>
<feature type="binding site" evidence="1">
    <location>
        <position position="173"/>
    </location>
    <ligand>
        <name>ATP</name>
        <dbReference type="ChEBI" id="CHEBI:30616"/>
    </ligand>
</feature>
<feature type="binding site" evidence="1">
    <location>
        <position position="183"/>
    </location>
    <ligand>
        <name>ATP</name>
        <dbReference type="ChEBI" id="CHEBI:30616"/>
    </ligand>
</feature>
<feature type="binding site" evidence="1">
    <location>
        <position position="220"/>
    </location>
    <ligand>
        <name>ATP</name>
        <dbReference type="ChEBI" id="CHEBI:30616"/>
    </ligand>
</feature>
<feature type="binding site" evidence="1">
    <location>
        <position position="293"/>
    </location>
    <ligand>
        <name>DNA</name>
        <dbReference type="ChEBI" id="CHEBI:16991"/>
    </ligand>
</feature>
<feature type="binding site" evidence="1">
    <location>
        <position position="312"/>
    </location>
    <ligand>
        <name>DNA</name>
        <dbReference type="ChEBI" id="CHEBI:16991"/>
    </ligand>
</feature>
<feature type="binding site" evidence="1">
    <location>
        <position position="317"/>
    </location>
    <ligand>
        <name>DNA</name>
        <dbReference type="ChEBI" id="CHEBI:16991"/>
    </ligand>
</feature>